<dbReference type="EMBL" id="AAFI02000023">
    <property type="protein sequence ID" value="EAL68149.2"/>
    <property type="molecule type" value="Genomic_DNA"/>
</dbReference>
<dbReference type="RefSeq" id="XP_642029.2">
    <property type="nucleotide sequence ID" value="XM_636937.2"/>
</dbReference>
<dbReference type="SMR" id="Q54Z23"/>
<dbReference type="FunCoup" id="Q54Z23">
    <property type="interactions" value="97"/>
</dbReference>
<dbReference type="STRING" id="44689.Q54Z23"/>
<dbReference type="PaxDb" id="44689-DDB0233765"/>
<dbReference type="EnsemblProtists" id="EAL68149">
    <property type="protein sequence ID" value="EAL68149"/>
    <property type="gene ID" value="DDB_G0277953"/>
</dbReference>
<dbReference type="GeneID" id="8621240"/>
<dbReference type="KEGG" id="ddi:DDB_G0277953"/>
<dbReference type="dictyBase" id="DDB_G0277953">
    <property type="gene designation" value="ints6"/>
</dbReference>
<dbReference type="VEuPathDB" id="AmoebaDB:DDB_G0277953"/>
<dbReference type="eggNOG" id="KOG3768">
    <property type="taxonomic scope" value="Eukaryota"/>
</dbReference>
<dbReference type="HOGENOM" id="CLU_006789_0_0_1"/>
<dbReference type="InParanoid" id="Q54Z23"/>
<dbReference type="OMA" id="YMANSKG"/>
<dbReference type="PhylomeDB" id="Q54Z23"/>
<dbReference type="Reactome" id="R-DDI-6807505">
    <property type="pathway name" value="RNA polymerase II transcribes snRNA genes"/>
</dbReference>
<dbReference type="PRO" id="PR:Q54Z23"/>
<dbReference type="Proteomes" id="UP000002195">
    <property type="component" value="Chromosome 3"/>
</dbReference>
<dbReference type="GO" id="GO:0005694">
    <property type="term" value="C:chromosome"/>
    <property type="evidence" value="ECO:0007669"/>
    <property type="project" value="UniProtKB-SubCell"/>
</dbReference>
<dbReference type="GO" id="GO:0160232">
    <property type="term" value="C:INTAC complex"/>
    <property type="evidence" value="ECO:0000250"/>
    <property type="project" value="UniProtKB"/>
</dbReference>
<dbReference type="GO" id="GO:0032039">
    <property type="term" value="C:integrator complex"/>
    <property type="evidence" value="ECO:0000318"/>
    <property type="project" value="GO_Central"/>
</dbReference>
<dbReference type="GO" id="GO:0160240">
    <property type="term" value="P:RNA polymerase II transcription initiation surveillance"/>
    <property type="evidence" value="ECO:0000250"/>
    <property type="project" value="UniProtKB"/>
</dbReference>
<dbReference type="GO" id="GO:0034472">
    <property type="term" value="P:snRNA 3'-end processing"/>
    <property type="evidence" value="ECO:0000318"/>
    <property type="project" value="GO_Central"/>
</dbReference>
<dbReference type="CDD" id="cd00198">
    <property type="entry name" value="vWFA"/>
    <property type="match status" value="1"/>
</dbReference>
<dbReference type="FunFam" id="3.40.50.410:FF:000010">
    <property type="entry name" value="Integrator complex subunit 6 like"/>
    <property type="match status" value="1"/>
</dbReference>
<dbReference type="Gene3D" id="3.40.50.410">
    <property type="entry name" value="von Willebrand factor, type A domain"/>
    <property type="match status" value="1"/>
</dbReference>
<dbReference type="InterPro" id="IPR051113">
    <property type="entry name" value="Integrator_subunit6"/>
</dbReference>
<dbReference type="InterPro" id="IPR002035">
    <property type="entry name" value="VWF_A"/>
</dbReference>
<dbReference type="InterPro" id="IPR036465">
    <property type="entry name" value="vWFA_dom_sf"/>
</dbReference>
<dbReference type="PANTHER" id="PTHR12957">
    <property type="entry name" value="DEAD/H BOX POLYPEPTIDE 26/DICE1-RELATED"/>
    <property type="match status" value="1"/>
</dbReference>
<dbReference type="PANTHER" id="PTHR12957:SF2">
    <property type="entry name" value="INTEGRATOR COMPLEX SUBUNIT 6"/>
    <property type="match status" value="1"/>
</dbReference>
<dbReference type="Pfam" id="PF25462">
    <property type="entry name" value="Beta-barrel_INTS6"/>
    <property type="match status" value="1"/>
</dbReference>
<dbReference type="Pfam" id="PF13519">
    <property type="entry name" value="VWA_2"/>
    <property type="match status" value="1"/>
</dbReference>
<dbReference type="SUPFAM" id="SSF53300">
    <property type="entry name" value="vWA-like"/>
    <property type="match status" value="1"/>
</dbReference>
<dbReference type="PROSITE" id="PS50234">
    <property type="entry name" value="VWFA"/>
    <property type="match status" value="1"/>
</dbReference>
<accession>Q54Z23</accession>
<gene>
    <name type="primary">ints6</name>
    <name type="ORF">DDB_G0277953</name>
</gene>
<evidence type="ECO:0000250" key="1">
    <source>
        <dbReference type="UniProtKB" id="Q9UL03"/>
    </source>
</evidence>
<evidence type="ECO:0000255" key="2">
    <source>
        <dbReference type="PROSITE-ProRule" id="PRU00219"/>
    </source>
</evidence>
<evidence type="ECO:0000256" key="3">
    <source>
        <dbReference type="SAM" id="MobiDB-lite"/>
    </source>
</evidence>
<evidence type="ECO:0000305" key="4"/>
<reference key="1">
    <citation type="journal article" date="2005" name="Nature">
        <title>The genome of the social amoeba Dictyostelium discoideum.</title>
        <authorList>
            <person name="Eichinger L."/>
            <person name="Pachebat J.A."/>
            <person name="Gloeckner G."/>
            <person name="Rajandream M.A."/>
            <person name="Sucgang R."/>
            <person name="Berriman M."/>
            <person name="Song J."/>
            <person name="Olsen R."/>
            <person name="Szafranski K."/>
            <person name="Xu Q."/>
            <person name="Tunggal B."/>
            <person name="Kummerfeld S."/>
            <person name="Madera M."/>
            <person name="Konfortov B.A."/>
            <person name="Rivero F."/>
            <person name="Bankier A.T."/>
            <person name="Lehmann R."/>
            <person name="Hamlin N."/>
            <person name="Davies R."/>
            <person name="Gaudet P."/>
            <person name="Fey P."/>
            <person name="Pilcher K."/>
            <person name="Chen G."/>
            <person name="Saunders D."/>
            <person name="Sodergren E.J."/>
            <person name="Davis P."/>
            <person name="Kerhornou A."/>
            <person name="Nie X."/>
            <person name="Hall N."/>
            <person name="Anjard C."/>
            <person name="Hemphill L."/>
            <person name="Bason N."/>
            <person name="Farbrother P."/>
            <person name="Desany B."/>
            <person name="Just E."/>
            <person name="Morio T."/>
            <person name="Rost R."/>
            <person name="Churcher C.M."/>
            <person name="Cooper J."/>
            <person name="Haydock S."/>
            <person name="van Driessche N."/>
            <person name="Cronin A."/>
            <person name="Goodhead I."/>
            <person name="Muzny D.M."/>
            <person name="Mourier T."/>
            <person name="Pain A."/>
            <person name="Lu M."/>
            <person name="Harper D."/>
            <person name="Lindsay R."/>
            <person name="Hauser H."/>
            <person name="James K.D."/>
            <person name="Quiles M."/>
            <person name="Madan Babu M."/>
            <person name="Saito T."/>
            <person name="Buchrieser C."/>
            <person name="Wardroper A."/>
            <person name="Felder M."/>
            <person name="Thangavelu M."/>
            <person name="Johnson D."/>
            <person name="Knights A."/>
            <person name="Loulseged H."/>
            <person name="Mungall K.L."/>
            <person name="Oliver K."/>
            <person name="Price C."/>
            <person name="Quail M.A."/>
            <person name="Urushihara H."/>
            <person name="Hernandez J."/>
            <person name="Rabbinowitsch E."/>
            <person name="Steffen D."/>
            <person name="Sanders M."/>
            <person name="Ma J."/>
            <person name="Kohara Y."/>
            <person name="Sharp S."/>
            <person name="Simmonds M.N."/>
            <person name="Spiegler S."/>
            <person name="Tivey A."/>
            <person name="Sugano S."/>
            <person name="White B."/>
            <person name="Walker D."/>
            <person name="Woodward J.R."/>
            <person name="Winckler T."/>
            <person name="Tanaka Y."/>
            <person name="Shaulsky G."/>
            <person name="Schleicher M."/>
            <person name="Weinstock G.M."/>
            <person name="Rosenthal A."/>
            <person name="Cox E.C."/>
            <person name="Chisholm R.L."/>
            <person name="Gibbs R.A."/>
            <person name="Loomis W.F."/>
            <person name="Platzer M."/>
            <person name="Kay R.R."/>
            <person name="Williams J.G."/>
            <person name="Dear P.H."/>
            <person name="Noegel A.A."/>
            <person name="Barrell B.G."/>
            <person name="Kuspa A."/>
        </authorList>
    </citation>
    <scope>NUCLEOTIDE SEQUENCE [LARGE SCALE GENOMIC DNA]</scope>
    <source>
        <strain>AX4</strain>
    </source>
</reference>
<comment type="function">
    <text evidence="1">Component of the integrator complex, a multiprotein complex that terminates RNA polymerase II (Pol II) transcription in the promoter-proximal region of genes. The integrator complex provides a quality checkpoint during transcription elongation by driving premature transcription termination of transcripts that are unfavorably configured for transcriptional elongation: the complex terminates transcription by (1) catalyzing dephosphorylation of the C-terminal domain (CTD) of Pol II subunit polr2a, (2) degrading the exiting nascent RNA transcript via endonuclease activity and (3) promoting the release of Pol II from bound DNA. The integrator complex is also involved in terminating the synthesis of non-coding Pol II transcripts, such as enhancer RNAs (eRNAs), small nuclear RNAs (snRNAs), telomerase RNAs and long non-coding RNAs (lncRNAs). Within the integrator complex, INTS6 acts as a molecular adapter that promotes assembly of protein phosphatase 2A (PP2A) subunits to the integrator core complex, promoting recruitment of PP2A to transcription pause-release checkpoint.</text>
</comment>
<comment type="subunit">
    <text evidence="1">Component of the Integrator complex. The core complex associates with protein phosphatase 2A subunits, to form the Integrator-PP2A (INTAC) complex.</text>
</comment>
<comment type="subcellular location">
    <subcellularLocation>
        <location evidence="1">Nucleus</location>
    </subcellularLocation>
    <subcellularLocation>
        <location evidence="1">Chromosome</location>
    </subcellularLocation>
    <text evidence="1">Associates with chromatin and transcription pause-release checkpoint.</text>
</comment>
<comment type="similarity">
    <text evidence="4">Belongs to the Integrator subunit 6 family.</text>
</comment>
<organism>
    <name type="scientific">Dictyostelium discoideum</name>
    <name type="common">Social amoeba</name>
    <dbReference type="NCBI Taxonomy" id="44689"/>
    <lineage>
        <taxon>Eukaryota</taxon>
        <taxon>Amoebozoa</taxon>
        <taxon>Evosea</taxon>
        <taxon>Eumycetozoa</taxon>
        <taxon>Dictyostelia</taxon>
        <taxon>Dictyosteliales</taxon>
        <taxon>Dictyosteliaceae</taxon>
        <taxon>Dictyostelium</taxon>
    </lineage>
</organism>
<sequence>MLITFVVDTSGSMSQKTTNGMTLLDCSKAAIEHFIKIRSKDASMRNDRFFLITSEENPITAVKIGWKDNFNSFIQEVKNLQTKDMSNLGFSLQKSFDFLNQFRVQSSIDNYGQGRNPWFIEPAIIILLTDGSSLTNSSSIIENFTLPKTQFHLNSDPTSEPFRWDQRLFSIVLKFGGISSNKSLPLPMEPAIAPMCDVTGGRCQVATNMKTMIQQVEGLMQKLQGGVVVSFEPLVNQQQAQAQAQQLLPPPPLSLHKMLYVRQQVGFWPIPEGYYPDITSLSLPMRLAHPVIRYSIIEADTHIPENFPFDKYELEPCPLTQYLLTNKIQCTHVFMMNSLQVSGQGEPFGCLRLNSAGNSVNLFVFPYNFPRLWILLEDLTTTFKMMPSQKWKQEFEGYLLSIPPYYINPLRGALKRFCSLNLIPDNIDSQFINFINNTIKKIKSQSISKMESERIINSKQQQQQQQQFSHQQQFQQFQQKQAQQYDSSPSSPSSSPSSSSSNTSGIGSSSGSGNLATKKKSFHQILDQGYSSDILSELIQQDNETSENSELSQELSESSTTGSSGGGSSSNINILQRNVFDIGRVQLLNQLDKMKDHIFKKKIQKDESKHHLPISQMGNYHETIGKRETLRDIDDDKKPNTPLFGNPYRKEKSNQRYMSIDEADEGGNLTSDGEGKNKLTPNKRRRLSGRGYPSLPTLNSLSNTSTTTSTTTTTTTTTPATSTNTTITSSSSSSSSSSSSSSSSSSSSSSSSSSSSSSSSSSSSTITSSPPTTSTNPLLQPTTASITTSTVPIPSTTVSSPITNTSIITTNIHIQPTQISSPPPLSSSLAINQPTQTSSVISSSSSPPPPPPPPPLPIVNNNNVIPSSLVQVTNNNNNIPTVPVNNISPPTSTISSPNNQHLLPTPPNINNTSISTTNVPNISTTTSNESIISQPISPTHKNIAGVVRPFRPNSPPLTIDTLTSSSSSSTIPTTTNGSLSTHDTPNTSPTLSSINYNNNNNNNNNNNNNNNNNNNNNNNNNNRKNSIITTTTPNNETNNIIKFVHKEIRRPTKDNHDIIIQQLSKLFSILSDGNLRLKLLKDTINLAKEYKKSSLISKLIGYIDQIK</sequence>
<name>INT6_DICDI</name>
<keyword id="KW-0158">Chromosome</keyword>
<keyword id="KW-0539">Nucleus</keyword>
<keyword id="KW-1185">Reference proteome</keyword>
<protein>
    <recommendedName>
        <fullName>Integrator complex subunit 6 homolog</fullName>
    </recommendedName>
</protein>
<proteinExistence type="inferred from homology"/>
<feature type="chain" id="PRO_0000344378" description="Integrator complex subunit 6 homolog">
    <location>
        <begin position="1"/>
        <end position="1107"/>
    </location>
</feature>
<feature type="domain" description="VWFA" evidence="2">
    <location>
        <begin position="2"/>
        <end position="195"/>
    </location>
</feature>
<feature type="domain" description="MIF4G">
    <location>
        <begin position="1041"/>
        <end position="1103"/>
    </location>
</feature>
<feature type="region of interest" description="Disordered" evidence="3">
    <location>
        <begin position="454"/>
        <end position="515"/>
    </location>
</feature>
<feature type="region of interest" description="Disordered" evidence="3">
    <location>
        <begin position="542"/>
        <end position="572"/>
    </location>
</feature>
<feature type="region of interest" description="Disordered" evidence="3">
    <location>
        <begin position="629"/>
        <end position="801"/>
    </location>
</feature>
<feature type="region of interest" description="Disordered" evidence="3">
    <location>
        <begin position="818"/>
        <end position="861"/>
    </location>
</feature>
<feature type="region of interest" description="Disordered" evidence="3">
    <location>
        <begin position="946"/>
        <end position="1034"/>
    </location>
</feature>
<feature type="compositionally biased region" description="Low complexity" evidence="3">
    <location>
        <begin position="460"/>
        <end position="513"/>
    </location>
</feature>
<feature type="compositionally biased region" description="Low complexity" evidence="3">
    <location>
        <begin position="546"/>
        <end position="562"/>
    </location>
</feature>
<feature type="compositionally biased region" description="Basic and acidic residues" evidence="3">
    <location>
        <begin position="629"/>
        <end position="639"/>
    </location>
</feature>
<feature type="compositionally biased region" description="Low complexity" evidence="3">
    <location>
        <begin position="693"/>
        <end position="801"/>
    </location>
</feature>
<feature type="compositionally biased region" description="Pro residues" evidence="3">
    <location>
        <begin position="846"/>
        <end position="857"/>
    </location>
</feature>
<feature type="compositionally biased region" description="Low complexity" evidence="3">
    <location>
        <begin position="956"/>
        <end position="975"/>
    </location>
</feature>
<feature type="compositionally biased region" description="Polar residues" evidence="3">
    <location>
        <begin position="976"/>
        <end position="996"/>
    </location>
</feature>
<feature type="compositionally biased region" description="Low complexity" evidence="3">
    <location>
        <begin position="997"/>
        <end position="1034"/>
    </location>
</feature>